<comment type="function">
    <text evidence="1">Is required not only for elongation of protein synthesis but also for the initiation of all mRNA translation through initiator tRNA(fMet) aminoacylation.</text>
</comment>
<comment type="catalytic activity">
    <reaction evidence="1">
        <text>tRNA(Met) + L-methionine + ATP = L-methionyl-tRNA(Met) + AMP + diphosphate</text>
        <dbReference type="Rhea" id="RHEA:13481"/>
        <dbReference type="Rhea" id="RHEA-COMP:9667"/>
        <dbReference type="Rhea" id="RHEA-COMP:9698"/>
        <dbReference type="ChEBI" id="CHEBI:30616"/>
        <dbReference type="ChEBI" id="CHEBI:33019"/>
        <dbReference type="ChEBI" id="CHEBI:57844"/>
        <dbReference type="ChEBI" id="CHEBI:78442"/>
        <dbReference type="ChEBI" id="CHEBI:78530"/>
        <dbReference type="ChEBI" id="CHEBI:456215"/>
        <dbReference type="EC" id="6.1.1.10"/>
    </reaction>
</comment>
<comment type="subunit">
    <text evidence="1">Homodimer.</text>
</comment>
<comment type="subcellular location">
    <subcellularLocation>
        <location evidence="1">Cytoplasm</location>
    </subcellularLocation>
</comment>
<comment type="similarity">
    <text evidence="1">Belongs to the class-I aminoacyl-tRNA synthetase family. MetG type 2B subfamily.</text>
</comment>
<protein>
    <recommendedName>
        <fullName evidence="1">Methionine--tRNA ligase</fullName>
        <ecNumber evidence="1">6.1.1.10</ecNumber>
    </recommendedName>
    <alternativeName>
        <fullName evidence="1">Methionyl-tRNA synthetase</fullName>
        <shortName evidence="1">MetRS</shortName>
    </alternativeName>
</protein>
<reference key="1">
    <citation type="journal article" date="2003" name="Mol. Microbiol.">
        <title>Genome-based analysis of virulence genes in a non-biofilm-forming Staphylococcus epidermidis strain (ATCC 12228).</title>
        <authorList>
            <person name="Zhang Y.-Q."/>
            <person name="Ren S.-X."/>
            <person name="Li H.-L."/>
            <person name="Wang Y.-X."/>
            <person name="Fu G."/>
            <person name="Yang J."/>
            <person name="Qin Z.-Q."/>
            <person name="Miao Y.-G."/>
            <person name="Wang W.-Y."/>
            <person name="Chen R.-S."/>
            <person name="Shen Y."/>
            <person name="Chen Z."/>
            <person name="Yuan Z.-H."/>
            <person name="Zhao G.-P."/>
            <person name="Qu D."/>
            <person name="Danchin A."/>
            <person name="Wen Y.-M."/>
        </authorList>
    </citation>
    <scope>NUCLEOTIDE SEQUENCE [LARGE SCALE GENOMIC DNA]</scope>
    <source>
        <strain>ATCC 12228 / FDA PCI 1200</strain>
    </source>
</reference>
<keyword id="KW-0030">Aminoacyl-tRNA synthetase</keyword>
<keyword id="KW-0067">ATP-binding</keyword>
<keyword id="KW-0963">Cytoplasm</keyword>
<keyword id="KW-0436">Ligase</keyword>
<keyword id="KW-0547">Nucleotide-binding</keyword>
<keyword id="KW-0648">Protein biosynthesis</keyword>
<keyword id="KW-0694">RNA-binding</keyword>
<keyword id="KW-0820">tRNA-binding</keyword>
<accession>Q8CQU3</accession>
<evidence type="ECO:0000255" key="1">
    <source>
        <dbReference type="HAMAP-Rule" id="MF_01228"/>
    </source>
</evidence>
<dbReference type="EC" id="6.1.1.10" evidence="1"/>
<dbReference type="EMBL" id="AE015929">
    <property type="protein sequence ID" value="AAO05935.1"/>
    <property type="molecule type" value="Genomic_DNA"/>
</dbReference>
<dbReference type="RefSeq" id="NP_765848.1">
    <property type="nucleotide sequence ID" value="NC_004461.1"/>
</dbReference>
<dbReference type="RefSeq" id="WP_002457101.1">
    <property type="nucleotide sequence ID" value="NZ_WBME01000023.1"/>
</dbReference>
<dbReference type="SMR" id="Q8CQU3"/>
<dbReference type="GeneID" id="50019599"/>
<dbReference type="KEGG" id="sep:SE_2293"/>
<dbReference type="PATRIC" id="fig|176280.10.peg.2236"/>
<dbReference type="eggNOG" id="COG0073">
    <property type="taxonomic scope" value="Bacteria"/>
</dbReference>
<dbReference type="eggNOG" id="COG0143">
    <property type="taxonomic scope" value="Bacteria"/>
</dbReference>
<dbReference type="HOGENOM" id="CLU_009710_9_4_9"/>
<dbReference type="OrthoDB" id="9810191at2"/>
<dbReference type="Proteomes" id="UP000001411">
    <property type="component" value="Chromosome"/>
</dbReference>
<dbReference type="GO" id="GO:0005737">
    <property type="term" value="C:cytoplasm"/>
    <property type="evidence" value="ECO:0007669"/>
    <property type="project" value="UniProtKB-SubCell"/>
</dbReference>
<dbReference type="GO" id="GO:0005524">
    <property type="term" value="F:ATP binding"/>
    <property type="evidence" value="ECO:0007669"/>
    <property type="project" value="UniProtKB-UniRule"/>
</dbReference>
<dbReference type="GO" id="GO:0004825">
    <property type="term" value="F:methionine-tRNA ligase activity"/>
    <property type="evidence" value="ECO:0007669"/>
    <property type="project" value="UniProtKB-UniRule"/>
</dbReference>
<dbReference type="GO" id="GO:0000049">
    <property type="term" value="F:tRNA binding"/>
    <property type="evidence" value="ECO:0007669"/>
    <property type="project" value="UniProtKB-KW"/>
</dbReference>
<dbReference type="GO" id="GO:0006431">
    <property type="term" value="P:methionyl-tRNA aminoacylation"/>
    <property type="evidence" value="ECO:0007669"/>
    <property type="project" value="UniProtKB-UniRule"/>
</dbReference>
<dbReference type="CDD" id="cd07957">
    <property type="entry name" value="Anticodon_Ia_Met"/>
    <property type="match status" value="1"/>
</dbReference>
<dbReference type="CDD" id="cd00814">
    <property type="entry name" value="MetRS_core"/>
    <property type="match status" value="1"/>
</dbReference>
<dbReference type="CDD" id="cd02800">
    <property type="entry name" value="tRNA_bind_EcMetRS_like"/>
    <property type="match status" value="1"/>
</dbReference>
<dbReference type="FunFam" id="1.10.730.10:FF:000026">
    <property type="entry name" value="Methionine--tRNA ligase"/>
    <property type="match status" value="1"/>
</dbReference>
<dbReference type="FunFam" id="2.170.220.10:FF:000002">
    <property type="entry name" value="Methionine--tRNA ligase"/>
    <property type="match status" value="1"/>
</dbReference>
<dbReference type="FunFam" id="2.40.50.140:FF:000042">
    <property type="entry name" value="Methionine--tRNA ligase"/>
    <property type="match status" value="1"/>
</dbReference>
<dbReference type="Gene3D" id="2.170.220.10">
    <property type="match status" value="1"/>
</dbReference>
<dbReference type="Gene3D" id="3.40.50.620">
    <property type="entry name" value="HUPs"/>
    <property type="match status" value="1"/>
</dbReference>
<dbReference type="Gene3D" id="1.10.730.10">
    <property type="entry name" value="Isoleucyl-tRNA Synthetase, Domain 1"/>
    <property type="match status" value="1"/>
</dbReference>
<dbReference type="Gene3D" id="2.40.50.140">
    <property type="entry name" value="Nucleic acid-binding proteins"/>
    <property type="match status" value="1"/>
</dbReference>
<dbReference type="HAMAP" id="MF_01228">
    <property type="entry name" value="Met_tRNA_synth_type2"/>
    <property type="match status" value="1"/>
</dbReference>
<dbReference type="InterPro" id="IPR001412">
    <property type="entry name" value="aa-tRNA-synth_I_CS"/>
</dbReference>
<dbReference type="InterPro" id="IPR041872">
    <property type="entry name" value="Anticodon_Met"/>
</dbReference>
<dbReference type="InterPro" id="IPR013155">
    <property type="entry name" value="M/V/L/I-tRNA-synth_anticd-bd"/>
</dbReference>
<dbReference type="InterPro" id="IPR004495">
    <property type="entry name" value="Met-tRNA-synth_bsu_C"/>
</dbReference>
<dbReference type="InterPro" id="IPR014758">
    <property type="entry name" value="Met-tRNA_synth"/>
</dbReference>
<dbReference type="InterPro" id="IPR023457">
    <property type="entry name" value="Met-tRNA_synth_2"/>
</dbReference>
<dbReference type="InterPro" id="IPR015413">
    <property type="entry name" value="Methionyl/Leucyl_tRNA_Synth"/>
</dbReference>
<dbReference type="InterPro" id="IPR033911">
    <property type="entry name" value="MetRS_core"/>
</dbReference>
<dbReference type="InterPro" id="IPR012340">
    <property type="entry name" value="NA-bd_OB-fold"/>
</dbReference>
<dbReference type="InterPro" id="IPR014729">
    <property type="entry name" value="Rossmann-like_a/b/a_fold"/>
</dbReference>
<dbReference type="InterPro" id="IPR002547">
    <property type="entry name" value="tRNA-bd_dom"/>
</dbReference>
<dbReference type="InterPro" id="IPR009080">
    <property type="entry name" value="tRNAsynth_Ia_anticodon-bd"/>
</dbReference>
<dbReference type="NCBIfam" id="TIGR00398">
    <property type="entry name" value="metG"/>
    <property type="match status" value="1"/>
</dbReference>
<dbReference type="NCBIfam" id="TIGR00399">
    <property type="entry name" value="metG_C_term"/>
    <property type="match status" value="1"/>
</dbReference>
<dbReference type="NCBIfam" id="NF008900">
    <property type="entry name" value="PRK12267.1"/>
    <property type="match status" value="1"/>
</dbReference>
<dbReference type="PANTHER" id="PTHR43326:SF1">
    <property type="entry name" value="METHIONINE--TRNA LIGASE, MITOCHONDRIAL"/>
    <property type="match status" value="1"/>
</dbReference>
<dbReference type="PANTHER" id="PTHR43326">
    <property type="entry name" value="METHIONYL-TRNA SYNTHETASE"/>
    <property type="match status" value="1"/>
</dbReference>
<dbReference type="Pfam" id="PF08264">
    <property type="entry name" value="Anticodon_1"/>
    <property type="match status" value="1"/>
</dbReference>
<dbReference type="Pfam" id="PF09334">
    <property type="entry name" value="tRNA-synt_1g"/>
    <property type="match status" value="1"/>
</dbReference>
<dbReference type="Pfam" id="PF01588">
    <property type="entry name" value="tRNA_bind"/>
    <property type="match status" value="1"/>
</dbReference>
<dbReference type="PRINTS" id="PR01041">
    <property type="entry name" value="TRNASYNTHMET"/>
</dbReference>
<dbReference type="SUPFAM" id="SSF47323">
    <property type="entry name" value="Anticodon-binding domain of a subclass of class I aminoacyl-tRNA synthetases"/>
    <property type="match status" value="1"/>
</dbReference>
<dbReference type="SUPFAM" id="SSF50249">
    <property type="entry name" value="Nucleic acid-binding proteins"/>
    <property type="match status" value="1"/>
</dbReference>
<dbReference type="SUPFAM" id="SSF52374">
    <property type="entry name" value="Nucleotidylyl transferase"/>
    <property type="match status" value="1"/>
</dbReference>
<dbReference type="PROSITE" id="PS00178">
    <property type="entry name" value="AA_TRNA_LIGASE_I"/>
    <property type="match status" value="1"/>
</dbReference>
<dbReference type="PROSITE" id="PS50886">
    <property type="entry name" value="TRBD"/>
    <property type="match status" value="1"/>
</dbReference>
<feature type="chain" id="PRO_0000139245" description="Methionine--tRNA ligase">
    <location>
        <begin position="1"/>
        <end position="656"/>
    </location>
</feature>
<feature type="domain" description="tRNA-binding" evidence="1">
    <location>
        <begin position="556"/>
        <end position="656"/>
    </location>
</feature>
<feature type="short sequence motif" description="'HIGH' region">
    <location>
        <begin position="13"/>
        <end position="23"/>
    </location>
</feature>
<feature type="short sequence motif" description="'KMSKS' region">
    <location>
        <begin position="308"/>
        <end position="312"/>
    </location>
</feature>
<feature type="binding site" evidence="1">
    <location>
        <position position="311"/>
    </location>
    <ligand>
        <name>ATP</name>
        <dbReference type="ChEBI" id="CHEBI:30616"/>
    </ligand>
</feature>
<organism>
    <name type="scientific">Staphylococcus epidermidis (strain ATCC 12228 / FDA PCI 1200)</name>
    <dbReference type="NCBI Taxonomy" id="176280"/>
    <lineage>
        <taxon>Bacteria</taxon>
        <taxon>Bacillati</taxon>
        <taxon>Bacillota</taxon>
        <taxon>Bacilli</taxon>
        <taxon>Bacillales</taxon>
        <taxon>Staphylococcaceae</taxon>
        <taxon>Staphylococcus</taxon>
    </lineage>
</organism>
<gene>
    <name evidence="1" type="primary">metG</name>
    <name type="ordered locus">SE_2293</name>
</gene>
<name>SYM_STAES</name>
<sequence>MAKDTFYITTPIYYPSGNLHIGHAYSTVAGDVIARYKRMQGYDVRYLTGTDEHGQKIQEKAQKAGKTELEYLDEMISGIKNLWSKLEISNDDFIRTTEERHKQVVEKVFERLLKQGDIYLGEYEGWYSVPDETYYTESQLVDPVYENGKIVGGKSPDSGHEVELVKEESYFFNINKYTDRLLEFYDENPDFIQPPSRKNEMINNFIKPGLEDLAVSRTSFDWGVRVPSNPKHVVYVWIDALVNYISSLGYLSDDETLFNKYWPADIHLMAKEIVRFHSIIWPILLMALDLPLPKKVFAHGWILMKDGKMSKSKGNVVDPNVLIDRYGLDATRYYLMRELPFGSDGVFTPEAFVERTNYDLANDLGNLVNRTISMINKYFHGELPAYQGPKHELDEKMEAMALETVKSFNDNMESLQFSVALSTVWKFISRTNKYIDETQPWVLAKDENQREMLGNVMAHLVENIRFATILLQPFLTHAPREIFKQLNINNPDLHQLDSLQQYGMLSEAITVTEKPTPIFPRLDTEAEIAYIKESMQPPKSIKQSDEPGKEQIDIKDFDKVEIKAATIIDAENVKKSEKLLKIKVELDNEQRQIVSGIAKFYRPEDIIGKKVAVVTNLKPAKLMGQKSEGMILSAEKDGVLTLISLPSAIPNGAVIK</sequence>
<proteinExistence type="inferred from homology"/>